<sequence>MNVAETYEPTPIIFTDNAAAKVKSLIEDEGNDELSLRVFVTGGGCSGFQYGFSFDEAVNEDDTIVEKDGVRLVVDSLSYQYLVGAEVDFREGLEGAQFVIKNPNASTTCGCGSSFSI</sequence>
<accession>Q2S8Y5</accession>
<evidence type="ECO:0000255" key="1">
    <source>
        <dbReference type="HAMAP-Rule" id="MF_01380"/>
    </source>
</evidence>
<feature type="chain" id="PRO_0000311492" description="Iron-sulfur cluster insertion protein ErpA">
    <location>
        <begin position="1"/>
        <end position="117"/>
    </location>
</feature>
<feature type="binding site" evidence="1">
    <location>
        <position position="45"/>
    </location>
    <ligand>
        <name>iron-sulfur cluster</name>
        <dbReference type="ChEBI" id="CHEBI:30408"/>
    </ligand>
</feature>
<feature type="binding site" evidence="1">
    <location>
        <position position="109"/>
    </location>
    <ligand>
        <name>iron-sulfur cluster</name>
        <dbReference type="ChEBI" id="CHEBI:30408"/>
    </ligand>
</feature>
<feature type="binding site" evidence="1">
    <location>
        <position position="111"/>
    </location>
    <ligand>
        <name>iron-sulfur cluster</name>
        <dbReference type="ChEBI" id="CHEBI:30408"/>
    </ligand>
</feature>
<name>ERPA_HAHCH</name>
<proteinExistence type="inferred from homology"/>
<reference key="1">
    <citation type="journal article" date="2005" name="Nucleic Acids Res.">
        <title>Genomic blueprint of Hahella chejuensis, a marine microbe producing an algicidal agent.</title>
        <authorList>
            <person name="Jeong H."/>
            <person name="Yim J.H."/>
            <person name="Lee C."/>
            <person name="Choi S.-H."/>
            <person name="Park Y.K."/>
            <person name="Yoon S.H."/>
            <person name="Hur C.-G."/>
            <person name="Kang H.-Y."/>
            <person name="Kim D."/>
            <person name="Lee H.H."/>
            <person name="Park K.H."/>
            <person name="Park S.-H."/>
            <person name="Park H.-S."/>
            <person name="Lee H.K."/>
            <person name="Oh T.K."/>
            <person name="Kim J.F."/>
        </authorList>
    </citation>
    <scope>NUCLEOTIDE SEQUENCE [LARGE SCALE GENOMIC DNA]</scope>
    <source>
        <strain>KCTC 2396</strain>
    </source>
</reference>
<gene>
    <name evidence="1" type="primary">erpA</name>
    <name type="ordered locus">HCH_06242</name>
</gene>
<organism>
    <name type="scientific">Hahella chejuensis (strain KCTC 2396)</name>
    <dbReference type="NCBI Taxonomy" id="349521"/>
    <lineage>
        <taxon>Bacteria</taxon>
        <taxon>Pseudomonadati</taxon>
        <taxon>Pseudomonadota</taxon>
        <taxon>Gammaproteobacteria</taxon>
        <taxon>Oceanospirillales</taxon>
        <taxon>Hahellaceae</taxon>
        <taxon>Hahella</taxon>
    </lineage>
</organism>
<protein>
    <recommendedName>
        <fullName evidence="1">Iron-sulfur cluster insertion protein ErpA</fullName>
    </recommendedName>
</protein>
<dbReference type="EMBL" id="CP000155">
    <property type="protein sequence ID" value="ABC32889.1"/>
    <property type="molecule type" value="Genomic_DNA"/>
</dbReference>
<dbReference type="RefSeq" id="WP_011399945.1">
    <property type="nucleotide sequence ID" value="NC_007645.1"/>
</dbReference>
<dbReference type="SMR" id="Q2S8Y5"/>
<dbReference type="STRING" id="349521.HCH_06242"/>
<dbReference type="KEGG" id="hch:HCH_06242"/>
<dbReference type="eggNOG" id="COG0316">
    <property type="taxonomic scope" value="Bacteria"/>
</dbReference>
<dbReference type="HOGENOM" id="CLU_069054_5_3_6"/>
<dbReference type="OrthoDB" id="9801228at2"/>
<dbReference type="Proteomes" id="UP000000238">
    <property type="component" value="Chromosome"/>
</dbReference>
<dbReference type="GO" id="GO:0051537">
    <property type="term" value="F:2 iron, 2 sulfur cluster binding"/>
    <property type="evidence" value="ECO:0007669"/>
    <property type="project" value="UniProtKB-ARBA"/>
</dbReference>
<dbReference type="GO" id="GO:0051539">
    <property type="term" value="F:4 iron, 4 sulfur cluster binding"/>
    <property type="evidence" value="ECO:0007669"/>
    <property type="project" value="TreeGrafter"/>
</dbReference>
<dbReference type="GO" id="GO:0005506">
    <property type="term" value="F:iron ion binding"/>
    <property type="evidence" value="ECO:0007669"/>
    <property type="project" value="UniProtKB-UniRule"/>
</dbReference>
<dbReference type="GO" id="GO:0016226">
    <property type="term" value="P:iron-sulfur cluster assembly"/>
    <property type="evidence" value="ECO:0007669"/>
    <property type="project" value="UniProtKB-UniRule"/>
</dbReference>
<dbReference type="FunFam" id="2.60.300.12:FF:000002">
    <property type="entry name" value="Iron-sulfur cluster insertion protein ErpA"/>
    <property type="match status" value="1"/>
</dbReference>
<dbReference type="Gene3D" id="2.60.300.12">
    <property type="entry name" value="HesB-like domain"/>
    <property type="match status" value="1"/>
</dbReference>
<dbReference type="HAMAP" id="MF_01380">
    <property type="entry name" value="Fe_S_insert_ErpA"/>
    <property type="match status" value="1"/>
</dbReference>
<dbReference type="InterPro" id="IPR000361">
    <property type="entry name" value="FeS_biogenesis"/>
</dbReference>
<dbReference type="InterPro" id="IPR016092">
    <property type="entry name" value="FeS_cluster_insertion"/>
</dbReference>
<dbReference type="InterPro" id="IPR017870">
    <property type="entry name" value="FeS_cluster_insertion_CS"/>
</dbReference>
<dbReference type="InterPro" id="IPR023063">
    <property type="entry name" value="FeS_cluster_insertion_RrpA"/>
</dbReference>
<dbReference type="InterPro" id="IPR035903">
    <property type="entry name" value="HesB-like_dom_sf"/>
</dbReference>
<dbReference type="NCBIfam" id="TIGR00049">
    <property type="entry name" value="iron-sulfur cluster assembly accessory protein"/>
    <property type="match status" value="1"/>
</dbReference>
<dbReference type="NCBIfam" id="NF010147">
    <property type="entry name" value="PRK13623.1"/>
    <property type="match status" value="1"/>
</dbReference>
<dbReference type="PANTHER" id="PTHR43011">
    <property type="entry name" value="IRON-SULFUR CLUSTER ASSEMBLY 2 HOMOLOG, MITOCHONDRIAL"/>
    <property type="match status" value="1"/>
</dbReference>
<dbReference type="PANTHER" id="PTHR43011:SF1">
    <property type="entry name" value="IRON-SULFUR CLUSTER ASSEMBLY 2 HOMOLOG, MITOCHONDRIAL"/>
    <property type="match status" value="1"/>
</dbReference>
<dbReference type="Pfam" id="PF01521">
    <property type="entry name" value="Fe-S_biosyn"/>
    <property type="match status" value="1"/>
</dbReference>
<dbReference type="SUPFAM" id="SSF89360">
    <property type="entry name" value="HesB-like domain"/>
    <property type="match status" value="1"/>
</dbReference>
<dbReference type="PROSITE" id="PS01152">
    <property type="entry name" value="HESB"/>
    <property type="match status" value="1"/>
</dbReference>
<comment type="function">
    <text evidence="1">Required for insertion of 4Fe-4S clusters for at least IspG.</text>
</comment>
<comment type="cofactor">
    <cofactor evidence="1">
        <name>iron-sulfur cluster</name>
        <dbReference type="ChEBI" id="CHEBI:30408"/>
    </cofactor>
    <text evidence="1">Binds 1 iron-sulfur cluster per subunit.</text>
</comment>
<comment type="subunit">
    <text evidence="1">Homodimer.</text>
</comment>
<comment type="similarity">
    <text evidence="1">Belongs to the HesB/IscA family.</text>
</comment>
<keyword id="KW-0408">Iron</keyword>
<keyword id="KW-0411">Iron-sulfur</keyword>
<keyword id="KW-0479">Metal-binding</keyword>
<keyword id="KW-1185">Reference proteome</keyword>